<proteinExistence type="inferred from homology"/>
<feature type="chain" id="PRO_0000111388" description="Small ribosomal subunit protein uS9">
    <location>
        <begin position="1"/>
        <end position="136"/>
    </location>
</feature>
<feature type="region of interest" description="Disordered" evidence="1">
    <location>
        <begin position="103"/>
        <end position="136"/>
    </location>
</feature>
<feature type="compositionally biased region" description="Basic and acidic residues" evidence="1">
    <location>
        <begin position="103"/>
        <end position="116"/>
    </location>
</feature>
<feature type="compositionally biased region" description="Basic residues" evidence="1">
    <location>
        <begin position="117"/>
        <end position="136"/>
    </location>
</feature>
<feature type="sequence conflict" description="In Ref. 1; CAB09898." evidence="2" ref="1">
    <original>PLKTEGHLSRDPRAKERRKYGLKKARKAPQFSKR</original>
    <variation>L</variation>
    <location>
        <begin position="103"/>
        <end position="136"/>
    </location>
</feature>
<dbReference type="EMBL" id="Z97170">
    <property type="protein sequence ID" value="CAB09898.1"/>
    <property type="molecule type" value="Genomic_DNA"/>
</dbReference>
<dbReference type="EMBL" id="AE017126">
    <property type="protein sequence ID" value="AAQ00729.1"/>
    <property type="molecule type" value="Genomic_DNA"/>
</dbReference>
<dbReference type="RefSeq" id="NP_876076.1">
    <property type="nucleotide sequence ID" value="NC_005042.1"/>
</dbReference>
<dbReference type="RefSeq" id="WP_011125834.1">
    <property type="nucleotide sequence ID" value="NC_005042.1"/>
</dbReference>
<dbReference type="SMR" id="O07828"/>
<dbReference type="STRING" id="167539.Pro_1685"/>
<dbReference type="EnsemblBacteria" id="AAQ00729">
    <property type="protein sequence ID" value="AAQ00729"/>
    <property type="gene ID" value="Pro_1685"/>
</dbReference>
<dbReference type="KEGG" id="pma:Pro_1685"/>
<dbReference type="PATRIC" id="fig|167539.5.peg.1779"/>
<dbReference type="eggNOG" id="COG0103">
    <property type="taxonomic scope" value="Bacteria"/>
</dbReference>
<dbReference type="HOGENOM" id="CLU_046483_2_1_3"/>
<dbReference type="OrthoDB" id="9803965at2"/>
<dbReference type="Proteomes" id="UP000001420">
    <property type="component" value="Chromosome"/>
</dbReference>
<dbReference type="GO" id="GO:0022627">
    <property type="term" value="C:cytosolic small ribosomal subunit"/>
    <property type="evidence" value="ECO:0007669"/>
    <property type="project" value="TreeGrafter"/>
</dbReference>
<dbReference type="GO" id="GO:0003723">
    <property type="term" value="F:RNA binding"/>
    <property type="evidence" value="ECO:0007669"/>
    <property type="project" value="TreeGrafter"/>
</dbReference>
<dbReference type="GO" id="GO:0003735">
    <property type="term" value="F:structural constituent of ribosome"/>
    <property type="evidence" value="ECO:0007669"/>
    <property type="project" value="InterPro"/>
</dbReference>
<dbReference type="GO" id="GO:0006412">
    <property type="term" value="P:translation"/>
    <property type="evidence" value="ECO:0007669"/>
    <property type="project" value="UniProtKB-UniRule"/>
</dbReference>
<dbReference type="FunFam" id="3.30.230.10:FF:000001">
    <property type="entry name" value="30S ribosomal protein S9"/>
    <property type="match status" value="1"/>
</dbReference>
<dbReference type="Gene3D" id="3.30.230.10">
    <property type="match status" value="1"/>
</dbReference>
<dbReference type="HAMAP" id="MF_00532_B">
    <property type="entry name" value="Ribosomal_uS9_B"/>
    <property type="match status" value="1"/>
</dbReference>
<dbReference type="InterPro" id="IPR020568">
    <property type="entry name" value="Ribosomal_Su5_D2-typ_SF"/>
</dbReference>
<dbReference type="InterPro" id="IPR000754">
    <property type="entry name" value="Ribosomal_uS9"/>
</dbReference>
<dbReference type="InterPro" id="IPR023035">
    <property type="entry name" value="Ribosomal_uS9_bac/plastid"/>
</dbReference>
<dbReference type="InterPro" id="IPR020574">
    <property type="entry name" value="Ribosomal_uS9_CS"/>
</dbReference>
<dbReference type="InterPro" id="IPR014721">
    <property type="entry name" value="Ribsml_uS5_D2-typ_fold_subgr"/>
</dbReference>
<dbReference type="NCBIfam" id="NF001099">
    <property type="entry name" value="PRK00132.1"/>
    <property type="match status" value="1"/>
</dbReference>
<dbReference type="PANTHER" id="PTHR21569">
    <property type="entry name" value="RIBOSOMAL PROTEIN S9"/>
    <property type="match status" value="1"/>
</dbReference>
<dbReference type="PANTHER" id="PTHR21569:SF1">
    <property type="entry name" value="SMALL RIBOSOMAL SUBUNIT PROTEIN US9M"/>
    <property type="match status" value="1"/>
</dbReference>
<dbReference type="Pfam" id="PF00380">
    <property type="entry name" value="Ribosomal_S9"/>
    <property type="match status" value="1"/>
</dbReference>
<dbReference type="SUPFAM" id="SSF54211">
    <property type="entry name" value="Ribosomal protein S5 domain 2-like"/>
    <property type="match status" value="1"/>
</dbReference>
<dbReference type="PROSITE" id="PS00360">
    <property type="entry name" value="RIBOSOMAL_S9"/>
    <property type="match status" value="1"/>
</dbReference>
<accession>O07828</accession>
<comment type="similarity">
    <text evidence="2">Belongs to the universal ribosomal protein uS9 family.</text>
</comment>
<reference key="1">
    <citation type="submission" date="1997-06" db="EMBL/GenBank/DDBJ databases">
        <authorList>
            <person name="van der Staay G.W.M."/>
        </authorList>
    </citation>
    <scope>NUCLEOTIDE SEQUENCE [GENOMIC DNA]</scope>
    <source>
        <strain>SARG / CCMP1375 / SS120</strain>
    </source>
</reference>
<reference key="2">
    <citation type="journal article" date="2003" name="Proc. Natl. Acad. Sci. U.S.A.">
        <title>Genome sequence of the cyanobacterium Prochlorococcus marinus SS120, a nearly minimal oxyphototrophic genome.</title>
        <authorList>
            <person name="Dufresne A."/>
            <person name="Salanoubat M."/>
            <person name="Partensky F."/>
            <person name="Artiguenave F."/>
            <person name="Axmann I.M."/>
            <person name="Barbe V."/>
            <person name="Duprat S."/>
            <person name="Galperin M.Y."/>
            <person name="Koonin E.V."/>
            <person name="Le Gall F."/>
            <person name="Makarova K.S."/>
            <person name="Ostrowski M."/>
            <person name="Oztas S."/>
            <person name="Robert C."/>
            <person name="Rogozin I.B."/>
            <person name="Scanlan D.J."/>
            <person name="Tandeau de Marsac N."/>
            <person name="Weissenbach J."/>
            <person name="Wincker P."/>
            <person name="Wolf Y.I."/>
            <person name="Hess W.R."/>
        </authorList>
    </citation>
    <scope>NUCLEOTIDE SEQUENCE [LARGE SCALE GENOMIC DNA]</scope>
    <source>
        <strain>SARG / CCMP1375 / SS120</strain>
    </source>
</reference>
<organism>
    <name type="scientific">Prochlorococcus marinus (strain SARG / CCMP1375 / SS120)</name>
    <dbReference type="NCBI Taxonomy" id="167539"/>
    <lineage>
        <taxon>Bacteria</taxon>
        <taxon>Bacillati</taxon>
        <taxon>Cyanobacteriota</taxon>
        <taxon>Cyanophyceae</taxon>
        <taxon>Synechococcales</taxon>
        <taxon>Prochlorococcaceae</taxon>
        <taxon>Prochlorococcus</taxon>
    </lineage>
</organism>
<name>RS9_PROMA</name>
<sequence>MNSSSKNAVVYWGTGRRKTSVARVRLIPGTGKITINGRPGDHYLNFNPAYLSAVKAPLHTLGLGEAYDVLVNVYGGGLTGQSDAIKQGAARALCELSVDNRKPLKTEGHLSRDPRAKERRKYGLKKARKAPQFSKR</sequence>
<evidence type="ECO:0000256" key="1">
    <source>
        <dbReference type="SAM" id="MobiDB-lite"/>
    </source>
</evidence>
<evidence type="ECO:0000305" key="2"/>
<keyword id="KW-1185">Reference proteome</keyword>
<keyword id="KW-0687">Ribonucleoprotein</keyword>
<keyword id="KW-0689">Ribosomal protein</keyword>
<gene>
    <name type="primary">rpsI</name>
    <name type="synonym">rps9</name>
    <name type="ordered locus">Pro_1685</name>
</gene>
<protein>
    <recommendedName>
        <fullName evidence="2">Small ribosomal subunit protein uS9</fullName>
    </recommendedName>
    <alternativeName>
        <fullName>30S ribosomal protein S9</fullName>
    </alternativeName>
</protein>